<organism>
    <name type="scientific">Serratia marcescens</name>
    <dbReference type="NCBI Taxonomy" id="615"/>
    <lineage>
        <taxon>Bacteria</taxon>
        <taxon>Pseudomonadati</taxon>
        <taxon>Pseudomonadota</taxon>
        <taxon>Gammaproteobacteria</taxon>
        <taxon>Enterobacterales</taxon>
        <taxon>Yersiniaceae</taxon>
        <taxon>Serratia</taxon>
    </lineage>
</organism>
<name>PRTT_SERMA</name>
<dbReference type="EC" id="3.4.21.-"/>
<dbReference type="EMBL" id="X59719">
    <property type="protein sequence ID" value="CAA42236.1"/>
    <property type="molecule type" value="Genomic_DNA"/>
</dbReference>
<dbReference type="PIR" id="S19882">
    <property type="entry name" value="SUSEMM"/>
</dbReference>
<dbReference type="SMR" id="P29805"/>
<dbReference type="MEROPS" id="S08.094"/>
<dbReference type="GO" id="GO:0005576">
    <property type="term" value="C:extracellular region"/>
    <property type="evidence" value="ECO:0007669"/>
    <property type="project" value="UniProtKB-SubCell"/>
</dbReference>
<dbReference type="GO" id="GO:0019867">
    <property type="term" value="C:outer membrane"/>
    <property type="evidence" value="ECO:0007669"/>
    <property type="project" value="InterPro"/>
</dbReference>
<dbReference type="GO" id="GO:0004252">
    <property type="term" value="F:serine-type endopeptidase activity"/>
    <property type="evidence" value="ECO:0007669"/>
    <property type="project" value="InterPro"/>
</dbReference>
<dbReference type="GO" id="GO:0016485">
    <property type="term" value="P:protein processing"/>
    <property type="evidence" value="ECO:0007669"/>
    <property type="project" value="TreeGrafter"/>
</dbReference>
<dbReference type="CDD" id="cd04848">
    <property type="entry name" value="Peptidases_S8_Autotransporter_serine_protease_like"/>
    <property type="match status" value="1"/>
</dbReference>
<dbReference type="Gene3D" id="2.40.128.130">
    <property type="entry name" value="Autotransporter beta-domain"/>
    <property type="match status" value="1"/>
</dbReference>
<dbReference type="Gene3D" id="3.40.50.200">
    <property type="entry name" value="Peptidase S8/S53 domain"/>
    <property type="match status" value="1"/>
</dbReference>
<dbReference type="InterPro" id="IPR005546">
    <property type="entry name" value="Autotransporte_beta"/>
</dbReference>
<dbReference type="InterPro" id="IPR036709">
    <property type="entry name" value="Autotransporte_beta_dom_sf"/>
</dbReference>
<dbReference type="InterPro" id="IPR013425">
    <property type="entry name" value="Autotrns_rpt"/>
</dbReference>
<dbReference type="InterPro" id="IPR006315">
    <property type="entry name" value="OM_autotransptr_brl_dom"/>
</dbReference>
<dbReference type="InterPro" id="IPR011050">
    <property type="entry name" value="Pectin_lyase_fold/virulence"/>
</dbReference>
<dbReference type="InterPro" id="IPR000209">
    <property type="entry name" value="Peptidase_S8/S53_dom"/>
</dbReference>
<dbReference type="InterPro" id="IPR036852">
    <property type="entry name" value="Peptidase_S8/S53_dom_sf"/>
</dbReference>
<dbReference type="InterPro" id="IPR022398">
    <property type="entry name" value="Peptidase_S8_His-AS"/>
</dbReference>
<dbReference type="InterPro" id="IPR015500">
    <property type="entry name" value="Peptidase_S8_subtilisin-rel"/>
</dbReference>
<dbReference type="InterPro" id="IPR034061">
    <property type="entry name" value="Peptidases_S8_Autotransporter"/>
</dbReference>
<dbReference type="NCBIfam" id="TIGR01414">
    <property type="entry name" value="autotrans_barl"/>
    <property type="match status" value="1"/>
</dbReference>
<dbReference type="NCBIfam" id="TIGR02601">
    <property type="entry name" value="autotrns_rpt"/>
    <property type="match status" value="1"/>
</dbReference>
<dbReference type="PANTHER" id="PTHR42884:SF14">
    <property type="entry name" value="NEUROENDOCRINE CONVERTASE 1"/>
    <property type="match status" value="1"/>
</dbReference>
<dbReference type="PANTHER" id="PTHR42884">
    <property type="entry name" value="PROPROTEIN CONVERTASE SUBTILISIN/KEXIN-RELATED"/>
    <property type="match status" value="1"/>
</dbReference>
<dbReference type="Pfam" id="PF03797">
    <property type="entry name" value="Autotransporter"/>
    <property type="match status" value="1"/>
</dbReference>
<dbReference type="Pfam" id="PF12951">
    <property type="entry name" value="PATR"/>
    <property type="match status" value="1"/>
</dbReference>
<dbReference type="Pfam" id="PF00082">
    <property type="entry name" value="Peptidase_S8"/>
    <property type="match status" value="1"/>
</dbReference>
<dbReference type="PRINTS" id="PR00723">
    <property type="entry name" value="SUBTILISIN"/>
</dbReference>
<dbReference type="SMART" id="SM00869">
    <property type="entry name" value="Autotransporter"/>
    <property type="match status" value="1"/>
</dbReference>
<dbReference type="SUPFAM" id="SSF103515">
    <property type="entry name" value="Autotransporter"/>
    <property type="match status" value="1"/>
</dbReference>
<dbReference type="SUPFAM" id="SSF51126">
    <property type="entry name" value="Pectin lyase-like"/>
    <property type="match status" value="1"/>
</dbReference>
<dbReference type="SUPFAM" id="SSF52743">
    <property type="entry name" value="Subtilisin-like"/>
    <property type="match status" value="1"/>
</dbReference>
<dbReference type="PROSITE" id="PS51208">
    <property type="entry name" value="AUTOTRANSPORTER"/>
    <property type="match status" value="1"/>
</dbReference>
<dbReference type="PROSITE" id="PS51892">
    <property type="entry name" value="SUBTILASE"/>
    <property type="match status" value="1"/>
</dbReference>
<dbReference type="PROSITE" id="PS00137">
    <property type="entry name" value="SUBTILASE_HIS"/>
    <property type="match status" value="1"/>
</dbReference>
<evidence type="ECO:0000250" key="1"/>
<evidence type="ECO:0000255" key="2">
    <source>
        <dbReference type="PROSITE-ProRule" id="PRU00556"/>
    </source>
</evidence>
<evidence type="ECO:0000255" key="3">
    <source>
        <dbReference type="PROSITE-ProRule" id="PRU01240"/>
    </source>
</evidence>
<evidence type="ECO:0000305" key="4"/>
<keyword id="KW-0378">Hydrolase</keyword>
<keyword id="KW-0645">Protease</keyword>
<keyword id="KW-0964">Secreted</keyword>
<keyword id="KW-0720">Serine protease</keyword>
<keyword id="KW-0732">Signal</keyword>
<keyword id="KW-0865">Zymogen</keyword>
<sequence>MILNKKLKLAYCVFLGCYGLSLHSSLAAYREPGQLGSPDSWKNAEFNRQWGLEAISAEFAYARAYTGKGVTIGVIDDAILSHPEFAGKLTRLDNGSYNFSYDKQDNMSFGTHGTHVAGIAAAKRDGSGMHGVAYDADIIGTKLNDYGNRNGREELIQSAARVINNSWGIRPDIRRDAKGDIIWLPNGRPDYVAWVKTDVINEVMRNKSNLEWGSEQPVPTGGHSAMATLLRAAKHGKLIVFSAGNYNNYNIPEAQKSLPYAFPEVLNNYLIVTNLSNNDKLSVSSTSCGHTASFLACQPGSSIYSSVGELVSNTGGAVNREAYNKGELTVKPDYGNMSGTSMAPDVTGFAAVLMQRFPYMSAAQISAVIKTTATDLGEVGIDHLFGWGRVNLRDAINGPKMFITQEDIPQEFYVPGSYSEKQFVVNIPGLGNIVEAGTPVERRCTSGECDFDSWSNDIRGHGGLTKTGAGTLAVLGNNTYSGDTWVKQGVLAYNGSVASNVYIENSGTVAGDRTVGAFRAVRGCEHGDAGNGYGTLHVLLDAVFDRGSQYNVELADKGRSDKLAARRAFLNGGSMNVSLDRSQKLMSQNEAELLVGNNYTILTTLDGVTGRFDNANPSYPFVKVALDYRGNDTGLGITKTDATFDSLASTENDKEVARAVETLNATEPVTETAKRSVSIPASEEANLQQSDAGAAQAVNEEASIVAGHPIYESFLGFTTARELQQATRQLSGQIHADMASAQINESRYLRDTATERLRQADGRRTASDIKADDNGAWAKLLGNWGHASGNDNATGYQTSTYGVLLGLDSELFDDGRLGVMTGYTRTSLVGGLQSVVHSDTTHLGLYGDKRFGALALPAGGTYTWHRIDTSRSVNYGAQADREKARYNARTGQLFIESGYDWSNDVVNLEPFANLAYTHYRNEGINEQGGAAALRGDKQSQSATASTLGLRADTQWQTDSVAIALPGELGWQHQYGKLERKTQLMFKRSDVAFDVNSVPVSRDGAILKAGVDVSINKNVVLSLGYGGQLSSNHQDNSVNAGLTWRF</sequence>
<proteinExistence type="inferred from homology"/>
<comment type="subcellular location">
    <subcellularLocation>
        <location>Secreted</location>
    </subcellularLocation>
</comment>
<comment type="similarity">
    <text evidence="4">Belongs to the peptidase S8 family.</text>
</comment>
<accession>P29805</accession>
<reference key="1">
    <citation type="submission" date="1992-02" db="EMBL/GenBank/DDBJ databases">
        <authorList>
            <person name="Lee S."/>
            <person name="Kim J."/>
            <person name="Kho Y."/>
            <person name="Rho H.M."/>
        </authorList>
    </citation>
    <scope>NUCLEOTIDE SEQUENCE [GENOMIC DNA]</scope>
    <source>
        <strain>RH1</strain>
    </source>
</reference>
<protein>
    <recommendedName>
        <fullName>Extracellular serine protease</fullName>
        <ecNumber>3.4.21.-</ecNumber>
    </recommendedName>
</protein>
<feature type="signal peptide" evidence="1">
    <location>
        <begin position="1"/>
        <end position="27"/>
    </location>
</feature>
<feature type="chain" id="PRO_0000027146" description="Extracellular serine protease">
    <location>
        <begin position="28"/>
        <end position="645"/>
    </location>
</feature>
<feature type="propeptide" id="PRO_0000027147" evidence="1">
    <location>
        <begin position="646"/>
        <end position="1045"/>
    </location>
</feature>
<feature type="domain" description="Peptidase S8" evidence="3">
    <location>
        <begin position="49"/>
        <end position="396"/>
    </location>
</feature>
<feature type="domain" description="Autotransporter" evidence="2">
    <location>
        <begin position="769"/>
        <end position="1045"/>
    </location>
</feature>
<feature type="active site" description="Charge relay system" evidence="3">
    <location>
        <position position="76"/>
    </location>
</feature>
<feature type="active site" description="Charge relay system" evidence="3">
    <location>
        <position position="112"/>
    </location>
</feature>
<feature type="active site" description="Charge relay system" evidence="3">
    <location>
        <position position="341"/>
    </location>
</feature>